<proteinExistence type="inferred from homology"/>
<gene>
    <name evidence="1" type="primary">era</name>
    <name type="ordered locus">Noca_1919</name>
</gene>
<accession>A1SHZ4</accession>
<feature type="chain" id="PRO_1000121343" description="GTPase Era">
    <location>
        <begin position="1"/>
        <end position="313"/>
    </location>
</feature>
<feature type="domain" description="Era-type G" evidence="2">
    <location>
        <begin position="13"/>
        <end position="186"/>
    </location>
</feature>
<feature type="domain" description="KH type-2" evidence="1">
    <location>
        <begin position="217"/>
        <end position="299"/>
    </location>
</feature>
<feature type="region of interest" description="G1" evidence="2">
    <location>
        <begin position="21"/>
        <end position="28"/>
    </location>
</feature>
<feature type="region of interest" description="G2" evidence="2">
    <location>
        <begin position="47"/>
        <end position="51"/>
    </location>
</feature>
<feature type="region of interest" description="G3" evidence="2">
    <location>
        <begin position="68"/>
        <end position="71"/>
    </location>
</feature>
<feature type="region of interest" description="G4" evidence="2">
    <location>
        <begin position="131"/>
        <end position="134"/>
    </location>
</feature>
<feature type="region of interest" description="G5" evidence="2">
    <location>
        <begin position="165"/>
        <end position="167"/>
    </location>
</feature>
<feature type="binding site" evidence="1">
    <location>
        <begin position="21"/>
        <end position="28"/>
    </location>
    <ligand>
        <name>GTP</name>
        <dbReference type="ChEBI" id="CHEBI:37565"/>
    </ligand>
</feature>
<feature type="binding site" evidence="1">
    <location>
        <begin position="68"/>
        <end position="72"/>
    </location>
    <ligand>
        <name>GTP</name>
        <dbReference type="ChEBI" id="CHEBI:37565"/>
    </ligand>
</feature>
<feature type="binding site" evidence="1">
    <location>
        <begin position="131"/>
        <end position="134"/>
    </location>
    <ligand>
        <name>GTP</name>
        <dbReference type="ChEBI" id="CHEBI:37565"/>
    </ligand>
</feature>
<name>ERA_NOCSJ</name>
<organism>
    <name type="scientific">Nocardioides sp. (strain ATCC BAA-499 / JS614)</name>
    <dbReference type="NCBI Taxonomy" id="196162"/>
    <lineage>
        <taxon>Bacteria</taxon>
        <taxon>Bacillati</taxon>
        <taxon>Actinomycetota</taxon>
        <taxon>Actinomycetes</taxon>
        <taxon>Propionibacteriales</taxon>
        <taxon>Nocardioidaceae</taxon>
        <taxon>Nocardioides</taxon>
    </lineage>
</organism>
<reference key="1">
    <citation type="submission" date="2006-12" db="EMBL/GenBank/DDBJ databases">
        <title>Complete sequence of chromosome 1 of Nocardioides sp. JS614.</title>
        <authorList>
            <person name="Copeland A."/>
            <person name="Lucas S."/>
            <person name="Lapidus A."/>
            <person name="Barry K."/>
            <person name="Detter J.C."/>
            <person name="Glavina del Rio T."/>
            <person name="Hammon N."/>
            <person name="Israni S."/>
            <person name="Dalin E."/>
            <person name="Tice H."/>
            <person name="Pitluck S."/>
            <person name="Thompson L.S."/>
            <person name="Brettin T."/>
            <person name="Bruce D."/>
            <person name="Han C."/>
            <person name="Tapia R."/>
            <person name="Schmutz J."/>
            <person name="Larimer F."/>
            <person name="Land M."/>
            <person name="Hauser L."/>
            <person name="Kyrpides N."/>
            <person name="Kim E."/>
            <person name="Mattes T."/>
            <person name="Gossett J."/>
            <person name="Richardson P."/>
        </authorList>
    </citation>
    <scope>NUCLEOTIDE SEQUENCE [LARGE SCALE GENOMIC DNA]</scope>
    <source>
        <strain>ATCC BAA-499 / JS614</strain>
    </source>
</reference>
<keyword id="KW-1003">Cell membrane</keyword>
<keyword id="KW-0963">Cytoplasm</keyword>
<keyword id="KW-0342">GTP-binding</keyword>
<keyword id="KW-0472">Membrane</keyword>
<keyword id="KW-0547">Nucleotide-binding</keyword>
<keyword id="KW-1185">Reference proteome</keyword>
<keyword id="KW-0690">Ribosome biogenesis</keyword>
<keyword id="KW-0694">RNA-binding</keyword>
<keyword id="KW-0699">rRNA-binding</keyword>
<dbReference type="EMBL" id="CP000509">
    <property type="protein sequence ID" value="ABL81429.1"/>
    <property type="molecule type" value="Genomic_DNA"/>
</dbReference>
<dbReference type="RefSeq" id="WP_011755376.1">
    <property type="nucleotide sequence ID" value="NC_008699.1"/>
</dbReference>
<dbReference type="SMR" id="A1SHZ4"/>
<dbReference type="STRING" id="196162.Noca_1919"/>
<dbReference type="KEGG" id="nca:Noca_1919"/>
<dbReference type="eggNOG" id="COG1159">
    <property type="taxonomic scope" value="Bacteria"/>
</dbReference>
<dbReference type="HOGENOM" id="CLU_038009_0_2_11"/>
<dbReference type="OrthoDB" id="9805918at2"/>
<dbReference type="Proteomes" id="UP000000640">
    <property type="component" value="Chromosome"/>
</dbReference>
<dbReference type="GO" id="GO:0005829">
    <property type="term" value="C:cytosol"/>
    <property type="evidence" value="ECO:0007669"/>
    <property type="project" value="TreeGrafter"/>
</dbReference>
<dbReference type="GO" id="GO:0005886">
    <property type="term" value="C:plasma membrane"/>
    <property type="evidence" value="ECO:0007669"/>
    <property type="project" value="UniProtKB-SubCell"/>
</dbReference>
<dbReference type="GO" id="GO:0005525">
    <property type="term" value="F:GTP binding"/>
    <property type="evidence" value="ECO:0007669"/>
    <property type="project" value="UniProtKB-UniRule"/>
</dbReference>
<dbReference type="GO" id="GO:0003924">
    <property type="term" value="F:GTPase activity"/>
    <property type="evidence" value="ECO:0007669"/>
    <property type="project" value="UniProtKB-UniRule"/>
</dbReference>
<dbReference type="GO" id="GO:0043024">
    <property type="term" value="F:ribosomal small subunit binding"/>
    <property type="evidence" value="ECO:0007669"/>
    <property type="project" value="TreeGrafter"/>
</dbReference>
<dbReference type="GO" id="GO:0070181">
    <property type="term" value="F:small ribosomal subunit rRNA binding"/>
    <property type="evidence" value="ECO:0007669"/>
    <property type="project" value="UniProtKB-UniRule"/>
</dbReference>
<dbReference type="GO" id="GO:0000028">
    <property type="term" value="P:ribosomal small subunit assembly"/>
    <property type="evidence" value="ECO:0007669"/>
    <property type="project" value="TreeGrafter"/>
</dbReference>
<dbReference type="CDD" id="cd04163">
    <property type="entry name" value="Era"/>
    <property type="match status" value="1"/>
</dbReference>
<dbReference type="CDD" id="cd22534">
    <property type="entry name" value="KH-II_Era"/>
    <property type="match status" value="1"/>
</dbReference>
<dbReference type="FunFam" id="3.30.300.20:FF:000003">
    <property type="entry name" value="GTPase Era"/>
    <property type="match status" value="1"/>
</dbReference>
<dbReference type="Gene3D" id="3.30.300.20">
    <property type="match status" value="1"/>
</dbReference>
<dbReference type="Gene3D" id="3.40.50.300">
    <property type="entry name" value="P-loop containing nucleotide triphosphate hydrolases"/>
    <property type="match status" value="1"/>
</dbReference>
<dbReference type="HAMAP" id="MF_00367">
    <property type="entry name" value="GTPase_Era"/>
    <property type="match status" value="1"/>
</dbReference>
<dbReference type="InterPro" id="IPR030388">
    <property type="entry name" value="G_ERA_dom"/>
</dbReference>
<dbReference type="InterPro" id="IPR006073">
    <property type="entry name" value="GTP-bd"/>
</dbReference>
<dbReference type="InterPro" id="IPR005662">
    <property type="entry name" value="GTPase_Era-like"/>
</dbReference>
<dbReference type="InterPro" id="IPR015946">
    <property type="entry name" value="KH_dom-like_a/b"/>
</dbReference>
<dbReference type="InterPro" id="IPR004044">
    <property type="entry name" value="KH_dom_type_2"/>
</dbReference>
<dbReference type="InterPro" id="IPR009019">
    <property type="entry name" value="KH_sf_prok-type"/>
</dbReference>
<dbReference type="InterPro" id="IPR027417">
    <property type="entry name" value="P-loop_NTPase"/>
</dbReference>
<dbReference type="InterPro" id="IPR005225">
    <property type="entry name" value="Small_GTP-bd"/>
</dbReference>
<dbReference type="NCBIfam" id="TIGR00436">
    <property type="entry name" value="era"/>
    <property type="match status" value="1"/>
</dbReference>
<dbReference type="NCBIfam" id="NF000908">
    <property type="entry name" value="PRK00089.1"/>
    <property type="match status" value="1"/>
</dbReference>
<dbReference type="NCBIfam" id="TIGR00231">
    <property type="entry name" value="small_GTP"/>
    <property type="match status" value="1"/>
</dbReference>
<dbReference type="PANTHER" id="PTHR42698">
    <property type="entry name" value="GTPASE ERA"/>
    <property type="match status" value="1"/>
</dbReference>
<dbReference type="PANTHER" id="PTHR42698:SF1">
    <property type="entry name" value="GTPASE ERA, MITOCHONDRIAL"/>
    <property type="match status" value="1"/>
</dbReference>
<dbReference type="Pfam" id="PF07650">
    <property type="entry name" value="KH_2"/>
    <property type="match status" value="1"/>
</dbReference>
<dbReference type="Pfam" id="PF01926">
    <property type="entry name" value="MMR_HSR1"/>
    <property type="match status" value="1"/>
</dbReference>
<dbReference type="SUPFAM" id="SSF52540">
    <property type="entry name" value="P-loop containing nucleoside triphosphate hydrolases"/>
    <property type="match status" value="1"/>
</dbReference>
<dbReference type="SUPFAM" id="SSF54814">
    <property type="entry name" value="Prokaryotic type KH domain (KH-domain type II)"/>
    <property type="match status" value="1"/>
</dbReference>
<dbReference type="PROSITE" id="PS51713">
    <property type="entry name" value="G_ERA"/>
    <property type="match status" value="1"/>
</dbReference>
<dbReference type="PROSITE" id="PS50823">
    <property type="entry name" value="KH_TYPE_2"/>
    <property type="match status" value="1"/>
</dbReference>
<protein>
    <recommendedName>
        <fullName evidence="1">GTPase Era</fullName>
    </recommendedName>
</protein>
<evidence type="ECO:0000255" key="1">
    <source>
        <dbReference type="HAMAP-Rule" id="MF_00367"/>
    </source>
</evidence>
<evidence type="ECO:0000255" key="2">
    <source>
        <dbReference type="PROSITE-ProRule" id="PRU01050"/>
    </source>
</evidence>
<comment type="function">
    <text evidence="1">An essential GTPase that binds both GDP and GTP, with rapid nucleotide exchange. Plays a role in 16S rRNA processing and 30S ribosomal subunit biogenesis and possibly also in cell cycle regulation and energy metabolism.</text>
</comment>
<comment type="subunit">
    <text evidence="1">Monomer.</text>
</comment>
<comment type="subcellular location">
    <subcellularLocation>
        <location>Cytoplasm</location>
    </subcellularLocation>
    <subcellularLocation>
        <location evidence="1">Cell membrane</location>
        <topology evidence="1">Peripheral membrane protein</topology>
    </subcellularLocation>
</comment>
<comment type="similarity">
    <text evidence="1 2">Belongs to the TRAFAC class TrmE-Era-EngA-EngB-Septin-like GTPase superfamily. Era GTPase family.</text>
</comment>
<sequence length="313" mass="33915">MTNQGSGPQPAHRSGFVSFVGRPNAGKSTLTNALVGSKVVITSDKPQTTRTVVRGIVHRDDAQLILVDTPGLHRPRTLLGERLNDLVKTTLAEVDVVAVCLPANEKVGPGDRFIVNEMAKIKRTTKVAIATKTDLASPDRIAEHLLDIARLGTETGTEWAEIVPVSAKSGDQVELLADLLVGLLPEGPQLYPDGDLSDAPEEILAAELIREAALEGLRDELPHSVAVVVEEMGLREGRPDAKPLLDIHANVYVERDSQKGIIIGPKGARLRDIGTRARGQIEALLGTPVYLDLHVKIAKDWQRDPRQLRKLGF</sequence>